<dbReference type="EMBL" id="CP000046">
    <property type="protein sequence ID" value="AAW38314.1"/>
    <property type="molecule type" value="Genomic_DNA"/>
</dbReference>
<dbReference type="RefSeq" id="WP_000219066.1">
    <property type="nucleotide sequence ID" value="NZ_JBGOFO010000008.1"/>
</dbReference>
<dbReference type="SMR" id="Q5HF38"/>
<dbReference type="KEGG" id="sac:SACOL1786"/>
<dbReference type="HOGENOM" id="CLU_037628_6_0_9"/>
<dbReference type="Proteomes" id="UP000000530">
    <property type="component" value="Chromosome"/>
</dbReference>
<dbReference type="GO" id="GO:0003700">
    <property type="term" value="F:DNA-binding transcription factor activity"/>
    <property type="evidence" value="ECO:0007669"/>
    <property type="project" value="TreeGrafter"/>
</dbReference>
<dbReference type="GO" id="GO:0000976">
    <property type="term" value="F:transcription cis-regulatory region binding"/>
    <property type="evidence" value="ECO:0007669"/>
    <property type="project" value="TreeGrafter"/>
</dbReference>
<dbReference type="CDD" id="cd01392">
    <property type="entry name" value="HTH_LacI"/>
    <property type="match status" value="1"/>
</dbReference>
<dbReference type="FunFam" id="1.10.260.40:FF:000002">
    <property type="entry name" value="HTH-type transcriptional repressor PurR"/>
    <property type="match status" value="1"/>
</dbReference>
<dbReference type="Gene3D" id="3.40.50.2300">
    <property type="match status" value="2"/>
</dbReference>
<dbReference type="Gene3D" id="1.10.260.40">
    <property type="entry name" value="lambda repressor-like DNA-binding domains"/>
    <property type="match status" value="1"/>
</dbReference>
<dbReference type="InterPro" id="IPR006377">
    <property type="entry name" value="CcpA"/>
</dbReference>
<dbReference type="InterPro" id="IPR000843">
    <property type="entry name" value="HTH_LacI"/>
</dbReference>
<dbReference type="InterPro" id="IPR046335">
    <property type="entry name" value="LacI/GalR-like_sensor"/>
</dbReference>
<dbReference type="InterPro" id="IPR010982">
    <property type="entry name" value="Lambda_DNA-bd_dom_sf"/>
</dbReference>
<dbReference type="InterPro" id="IPR028082">
    <property type="entry name" value="Peripla_BP_I"/>
</dbReference>
<dbReference type="NCBIfam" id="TIGR01481">
    <property type="entry name" value="ccpA"/>
    <property type="match status" value="1"/>
</dbReference>
<dbReference type="PANTHER" id="PTHR30146:SF150">
    <property type="entry name" value="ARABINOSE METABOLISM TRANSCRIPTIONAL REPRESSOR"/>
    <property type="match status" value="1"/>
</dbReference>
<dbReference type="PANTHER" id="PTHR30146">
    <property type="entry name" value="LACI-RELATED TRANSCRIPTIONAL REPRESSOR"/>
    <property type="match status" value="1"/>
</dbReference>
<dbReference type="Pfam" id="PF00356">
    <property type="entry name" value="LacI"/>
    <property type="match status" value="1"/>
</dbReference>
<dbReference type="Pfam" id="PF13377">
    <property type="entry name" value="Peripla_BP_3"/>
    <property type="match status" value="1"/>
</dbReference>
<dbReference type="PRINTS" id="PR00036">
    <property type="entry name" value="HTHLACI"/>
</dbReference>
<dbReference type="SMART" id="SM00354">
    <property type="entry name" value="HTH_LACI"/>
    <property type="match status" value="1"/>
</dbReference>
<dbReference type="SUPFAM" id="SSF47413">
    <property type="entry name" value="lambda repressor-like DNA-binding domains"/>
    <property type="match status" value="1"/>
</dbReference>
<dbReference type="SUPFAM" id="SSF53822">
    <property type="entry name" value="Periplasmic binding protein-like I"/>
    <property type="match status" value="1"/>
</dbReference>
<dbReference type="PROSITE" id="PS00356">
    <property type="entry name" value="HTH_LACI_1"/>
    <property type="match status" value="1"/>
</dbReference>
<dbReference type="PROSITE" id="PS50932">
    <property type="entry name" value="HTH_LACI_2"/>
    <property type="match status" value="1"/>
</dbReference>
<gene>
    <name type="primary">ccpA</name>
    <name type="ordered locus">SACOL1786</name>
</gene>
<name>CCPA_STAAC</name>
<sequence>MTVTIYDVAREARVSMATVSRVVNGNQNVKAETKNKVNEVIKRLNYRPNAVARGLASKKTTTVGVIIPDISNIYYSQLARGLEDIATMYKYHSIISNSDNDPEKEKEIFNNLLSKQVDGIIFLGGTITEEMKELINQSSVPVVVSGTNGKDAHIASVNIDFTEAAKEITGELIEKGAKSFALVGGEHSKKAQEDVLEGLTEVLNKNGLQLGDTLNCSGAESYKEGVKAFAKMKGNLPDAILCISDEEAIGIMHSAMDAGIKVPEELQIISFNNTRLVEMVRPQLSSVIQPLYDIGAVGMRLLTKYMNDEKIEEPNVVLPHRIEYRGTTK</sequence>
<accession>Q5HF38</accession>
<feature type="chain" id="PRO_0000107926" description="Catabolite control protein A">
    <location>
        <begin position="1"/>
        <end position="329"/>
    </location>
</feature>
<feature type="domain" description="HTH lacI-type" evidence="2">
    <location>
        <begin position="1"/>
        <end position="57"/>
    </location>
</feature>
<feature type="DNA-binding region" description="H-T-H motif" evidence="2">
    <location>
        <begin position="5"/>
        <end position="24"/>
    </location>
</feature>
<reference key="1">
    <citation type="journal article" date="2005" name="J. Bacteriol.">
        <title>Insights on evolution of virulence and resistance from the complete genome analysis of an early methicillin-resistant Staphylococcus aureus strain and a biofilm-producing methicillin-resistant Staphylococcus epidermidis strain.</title>
        <authorList>
            <person name="Gill S.R."/>
            <person name="Fouts D.E."/>
            <person name="Archer G.L."/>
            <person name="Mongodin E.F."/>
            <person name="DeBoy R.T."/>
            <person name="Ravel J."/>
            <person name="Paulsen I.T."/>
            <person name="Kolonay J.F."/>
            <person name="Brinkac L.M."/>
            <person name="Beanan M.J."/>
            <person name="Dodson R.J."/>
            <person name="Daugherty S.C."/>
            <person name="Madupu R."/>
            <person name="Angiuoli S.V."/>
            <person name="Durkin A.S."/>
            <person name="Haft D.H."/>
            <person name="Vamathevan J.J."/>
            <person name="Khouri H."/>
            <person name="Utterback T.R."/>
            <person name="Lee C."/>
            <person name="Dimitrov G."/>
            <person name="Jiang L."/>
            <person name="Qin H."/>
            <person name="Weidman J."/>
            <person name="Tran K."/>
            <person name="Kang K.H."/>
            <person name="Hance I.R."/>
            <person name="Nelson K.E."/>
            <person name="Fraser C.M."/>
        </authorList>
    </citation>
    <scope>NUCLEOTIDE SEQUENCE [LARGE SCALE GENOMIC DNA]</scope>
    <source>
        <strain>COL</strain>
    </source>
</reference>
<protein>
    <recommendedName>
        <fullName>Catabolite control protein A</fullName>
    </recommendedName>
</protein>
<keyword id="KW-0010">Activator</keyword>
<keyword id="KW-0238">DNA-binding</keyword>
<keyword id="KW-0678">Repressor</keyword>
<keyword id="KW-0804">Transcription</keyword>
<keyword id="KW-0805">Transcription regulation</keyword>
<organism>
    <name type="scientific">Staphylococcus aureus (strain COL)</name>
    <dbReference type="NCBI Taxonomy" id="93062"/>
    <lineage>
        <taxon>Bacteria</taxon>
        <taxon>Bacillati</taxon>
        <taxon>Bacillota</taxon>
        <taxon>Bacilli</taxon>
        <taxon>Bacillales</taxon>
        <taxon>Staphylococcaceae</taxon>
        <taxon>Staphylococcus</taxon>
    </lineage>
</organism>
<comment type="function">
    <text evidence="1">Global transcriptional regulator of carbon catabolite repression (CCR) and carbon catabolite activation (CCA), which ensures optimal energy usage under diverse conditions.</text>
</comment>
<proteinExistence type="inferred from homology"/>
<evidence type="ECO:0000250" key="1"/>
<evidence type="ECO:0000255" key="2">
    <source>
        <dbReference type="PROSITE-ProRule" id="PRU00111"/>
    </source>
</evidence>